<reference key="1">
    <citation type="journal article" date="2004" name="J. Mol. Microbiol. Biotechnol.">
        <title>The complete genome sequence of Bacillus licheniformis DSM13, an organism with great industrial potential.</title>
        <authorList>
            <person name="Veith B."/>
            <person name="Herzberg C."/>
            <person name="Steckel S."/>
            <person name="Feesche J."/>
            <person name="Maurer K.H."/>
            <person name="Ehrenreich P."/>
            <person name="Baeumer S."/>
            <person name="Henne A."/>
            <person name="Liesegang H."/>
            <person name="Merkl R."/>
            <person name="Ehrenreich A."/>
            <person name="Gottschalk G."/>
        </authorList>
    </citation>
    <scope>NUCLEOTIDE SEQUENCE [LARGE SCALE GENOMIC DNA]</scope>
    <source>
        <strain>ATCC 14580 / DSM 13 / JCM 2505 / CCUG 7422 / NBRC 12200 / NCIMB 9375 / NCTC 10341 / NRRL NRS-1264 / Gibson 46</strain>
    </source>
</reference>
<reference key="2">
    <citation type="journal article" date="2004" name="Genome Biol.">
        <title>Complete genome sequence of the industrial bacterium Bacillus licheniformis and comparisons with closely related Bacillus species.</title>
        <authorList>
            <person name="Rey M.W."/>
            <person name="Ramaiya P."/>
            <person name="Nelson B.A."/>
            <person name="Brody-Karpin S.D."/>
            <person name="Zaretsky E.J."/>
            <person name="Tang M."/>
            <person name="Lopez de Leon A."/>
            <person name="Xiang H."/>
            <person name="Gusti V."/>
            <person name="Clausen I.G."/>
            <person name="Olsen P.B."/>
            <person name="Rasmussen M.D."/>
            <person name="Andersen J.T."/>
            <person name="Joergensen P.L."/>
            <person name="Larsen T.S."/>
            <person name="Sorokin A."/>
            <person name="Bolotin A."/>
            <person name="Lapidus A."/>
            <person name="Galleron N."/>
            <person name="Ehrlich S.D."/>
            <person name="Berka R.M."/>
        </authorList>
    </citation>
    <scope>NUCLEOTIDE SEQUENCE [LARGE SCALE GENOMIC DNA]</scope>
    <source>
        <strain>ATCC 14580 / DSM 13 / JCM 2505 / CCUG 7422 / NBRC 12200 / NCIMB 9375 / NCTC 10341 / NRRL NRS-1264 / Gibson 46</strain>
    </source>
</reference>
<evidence type="ECO:0000255" key="1">
    <source>
        <dbReference type="HAMAP-Rule" id="MF_00315"/>
    </source>
</evidence>
<organism>
    <name type="scientific">Bacillus licheniformis (strain ATCC 14580 / DSM 13 / JCM 2505 / CCUG 7422 / NBRC 12200 / NCIMB 9375 / NCTC 10341 / NRRL NRS-1264 / Gibson 46)</name>
    <dbReference type="NCBI Taxonomy" id="279010"/>
    <lineage>
        <taxon>Bacteria</taxon>
        <taxon>Bacillati</taxon>
        <taxon>Bacillota</taxon>
        <taxon>Bacilli</taxon>
        <taxon>Bacillales</taxon>
        <taxon>Bacillaceae</taxon>
        <taxon>Bacillus</taxon>
    </lineage>
</organism>
<dbReference type="EC" id="2.2.1.7" evidence="1"/>
<dbReference type="EMBL" id="AE017333">
    <property type="protein sequence ID" value="AAU41472.1"/>
    <property type="molecule type" value="Genomic_DNA"/>
</dbReference>
<dbReference type="EMBL" id="CP000002">
    <property type="protein sequence ID" value="AAU24113.2"/>
    <property type="molecule type" value="Genomic_DNA"/>
</dbReference>
<dbReference type="RefSeq" id="WP_003183372.1">
    <property type="nucleotide sequence ID" value="NC_006322.1"/>
</dbReference>
<dbReference type="SMR" id="Q65HJ2"/>
<dbReference type="STRING" id="279010.BL01523"/>
<dbReference type="GeneID" id="92860807"/>
<dbReference type="KEGG" id="bld:BLi02598"/>
<dbReference type="KEGG" id="bli:BL01523"/>
<dbReference type="eggNOG" id="COG1154">
    <property type="taxonomic scope" value="Bacteria"/>
</dbReference>
<dbReference type="HOGENOM" id="CLU_009227_1_4_9"/>
<dbReference type="UniPathway" id="UPA00064">
    <property type="reaction ID" value="UER00091"/>
</dbReference>
<dbReference type="Proteomes" id="UP000000606">
    <property type="component" value="Chromosome"/>
</dbReference>
<dbReference type="GO" id="GO:0005829">
    <property type="term" value="C:cytosol"/>
    <property type="evidence" value="ECO:0007669"/>
    <property type="project" value="TreeGrafter"/>
</dbReference>
<dbReference type="GO" id="GO:0008661">
    <property type="term" value="F:1-deoxy-D-xylulose-5-phosphate synthase activity"/>
    <property type="evidence" value="ECO:0007669"/>
    <property type="project" value="UniProtKB-UniRule"/>
</dbReference>
<dbReference type="GO" id="GO:0000287">
    <property type="term" value="F:magnesium ion binding"/>
    <property type="evidence" value="ECO:0007669"/>
    <property type="project" value="UniProtKB-UniRule"/>
</dbReference>
<dbReference type="GO" id="GO:0030976">
    <property type="term" value="F:thiamine pyrophosphate binding"/>
    <property type="evidence" value="ECO:0007669"/>
    <property type="project" value="UniProtKB-UniRule"/>
</dbReference>
<dbReference type="GO" id="GO:0052865">
    <property type="term" value="P:1-deoxy-D-xylulose 5-phosphate biosynthetic process"/>
    <property type="evidence" value="ECO:0007669"/>
    <property type="project" value="UniProtKB-UniPathway"/>
</dbReference>
<dbReference type="GO" id="GO:0019288">
    <property type="term" value="P:isopentenyl diphosphate biosynthetic process, methylerythritol 4-phosphate pathway"/>
    <property type="evidence" value="ECO:0007669"/>
    <property type="project" value="TreeGrafter"/>
</dbReference>
<dbReference type="GO" id="GO:0016114">
    <property type="term" value="P:terpenoid biosynthetic process"/>
    <property type="evidence" value="ECO:0007669"/>
    <property type="project" value="UniProtKB-UniRule"/>
</dbReference>
<dbReference type="GO" id="GO:0009228">
    <property type="term" value="P:thiamine biosynthetic process"/>
    <property type="evidence" value="ECO:0007669"/>
    <property type="project" value="UniProtKB-UniRule"/>
</dbReference>
<dbReference type="CDD" id="cd02007">
    <property type="entry name" value="TPP_DXS"/>
    <property type="match status" value="1"/>
</dbReference>
<dbReference type="CDD" id="cd07033">
    <property type="entry name" value="TPP_PYR_DXS_TK_like"/>
    <property type="match status" value="1"/>
</dbReference>
<dbReference type="FunFam" id="3.40.50.920:FF:000002">
    <property type="entry name" value="1-deoxy-D-xylulose-5-phosphate synthase"/>
    <property type="match status" value="1"/>
</dbReference>
<dbReference type="FunFam" id="3.40.50.970:FF:000030">
    <property type="entry name" value="1-deoxy-D-xylulose-5-phosphate synthase"/>
    <property type="match status" value="1"/>
</dbReference>
<dbReference type="Gene3D" id="3.40.50.920">
    <property type="match status" value="1"/>
</dbReference>
<dbReference type="Gene3D" id="3.40.50.970">
    <property type="match status" value="2"/>
</dbReference>
<dbReference type="HAMAP" id="MF_00315">
    <property type="entry name" value="DXP_synth"/>
    <property type="match status" value="1"/>
</dbReference>
<dbReference type="InterPro" id="IPR005477">
    <property type="entry name" value="Dxylulose-5-P_synthase"/>
</dbReference>
<dbReference type="InterPro" id="IPR029061">
    <property type="entry name" value="THDP-binding"/>
</dbReference>
<dbReference type="InterPro" id="IPR009014">
    <property type="entry name" value="Transketo_C/PFOR_II"/>
</dbReference>
<dbReference type="InterPro" id="IPR005475">
    <property type="entry name" value="Transketolase-like_Pyr-bd"/>
</dbReference>
<dbReference type="InterPro" id="IPR020826">
    <property type="entry name" value="Transketolase_BS"/>
</dbReference>
<dbReference type="InterPro" id="IPR033248">
    <property type="entry name" value="Transketolase_C"/>
</dbReference>
<dbReference type="InterPro" id="IPR049557">
    <property type="entry name" value="Transketolase_CS"/>
</dbReference>
<dbReference type="NCBIfam" id="TIGR00204">
    <property type="entry name" value="dxs"/>
    <property type="match status" value="1"/>
</dbReference>
<dbReference type="NCBIfam" id="NF003933">
    <property type="entry name" value="PRK05444.2-2"/>
    <property type="match status" value="1"/>
</dbReference>
<dbReference type="PANTHER" id="PTHR43322">
    <property type="entry name" value="1-D-DEOXYXYLULOSE 5-PHOSPHATE SYNTHASE-RELATED"/>
    <property type="match status" value="1"/>
</dbReference>
<dbReference type="PANTHER" id="PTHR43322:SF5">
    <property type="entry name" value="1-DEOXY-D-XYLULOSE-5-PHOSPHATE SYNTHASE, CHLOROPLASTIC"/>
    <property type="match status" value="1"/>
</dbReference>
<dbReference type="Pfam" id="PF13292">
    <property type="entry name" value="DXP_synthase_N"/>
    <property type="match status" value="1"/>
</dbReference>
<dbReference type="Pfam" id="PF02779">
    <property type="entry name" value="Transket_pyr"/>
    <property type="match status" value="1"/>
</dbReference>
<dbReference type="Pfam" id="PF02780">
    <property type="entry name" value="Transketolase_C"/>
    <property type="match status" value="1"/>
</dbReference>
<dbReference type="SMART" id="SM00861">
    <property type="entry name" value="Transket_pyr"/>
    <property type="match status" value="1"/>
</dbReference>
<dbReference type="SUPFAM" id="SSF52518">
    <property type="entry name" value="Thiamin diphosphate-binding fold (THDP-binding)"/>
    <property type="match status" value="2"/>
</dbReference>
<dbReference type="SUPFAM" id="SSF52922">
    <property type="entry name" value="TK C-terminal domain-like"/>
    <property type="match status" value="1"/>
</dbReference>
<dbReference type="PROSITE" id="PS00801">
    <property type="entry name" value="TRANSKETOLASE_1"/>
    <property type="match status" value="1"/>
</dbReference>
<dbReference type="PROSITE" id="PS00802">
    <property type="entry name" value="TRANSKETOLASE_2"/>
    <property type="match status" value="1"/>
</dbReference>
<gene>
    <name evidence="1" type="primary">dxs</name>
    <name type="ordered locus">BLi02598</name>
    <name type="ordered locus">BL01523</name>
</gene>
<protein>
    <recommendedName>
        <fullName evidence="1">1-deoxy-D-xylulose-5-phosphate synthase</fullName>
        <ecNumber evidence="1">2.2.1.7</ecNumber>
    </recommendedName>
    <alternativeName>
        <fullName evidence="1">1-deoxyxylulose-5-phosphate synthase</fullName>
        <shortName evidence="1">DXP synthase</shortName>
        <shortName evidence="1">DXPS</shortName>
    </alternativeName>
</protein>
<comment type="function">
    <text evidence="1">Catalyzes the acyloin condensation reaction between C atoms 2 and 3 of pyruvate and glyceraldehyde 3-phosphate to yield 1-deoxy-D-xylulose-5-phosphate (DXP).</text>
</comment>
<comment type="catalytic activity">
    <reaction evidence="1">
        <text>D-glyceraldehyde 3-phosphate + pyruvate + H(+) = 1-deoxy-D-xylulose 5-phosphate + CO2</text>
        <dbReference type="Rhea" id="RHEA:12605"/>
        <dbReference type="ChEBI" id="CHEBI:15361"/>
        <dbReference type="ChEBI" id="CHEBI:15378"/>
        <dbReference type="ChEBI" id="CHEBI:16526"/>
        <dbReference type="ChEBI" id="CHEBI:57792"/>
        <dbReference type="ChEBI" id="CHEBI:59776"/>
        <dbReference type="EC" id="2.2.1.7"/>
    </reaction>
</comment>
<comment type="cofactor">
    <cofactor evidence="1">
        <name>Mg(2+)</name>
        <dbReference type="ChEBI" id="CHEBI:18420"/>
    </cofactor>
    <text evidence="1">Binds 1 Mg(2+) ion per subunit.</text>
</comment>
<comment type="cofactor">
    <cofactor evidence="1">
        <name>thiamine diphosphate</name>
        <dbReference type="ChEBI" id="CHEBI:58937"/>
    </cofactor>
    <text evidence="1">Binds 1 thiamine pyrophosphate per subunit.</text>
</comment>
<comment type="pathway">
    <text evidence="1">Metabolic intermediate biosynthesis; 1-deoxy-D-xylulose 5-phosphate biosynthesis; 1-deoxy-D-xylulose 5-phosphate from D-glyceraldehyde 3-phosphate and pyruvate: step 1/1.</text>
</comment>
<comment type="subunit">
    <text evidence="1">Homodimer.</text>
</comment>
<comment type="similarity">
    <text evidence="1">Belongs to the transketolase family. DXPS subfamily.</text>
</comment>
<sequence length="633" mass="69788">MDLLSIKDPAFLKNLSNEELESLSAEIRRFLIETLSESGGHIGPNLGVVELTIALHKEFDSPKDKFLWDVGHQSYVHKLLTGRGKDFATLRQHKGLCGFPKRNESEHDVWETGHSSTSLSGAMGMAAARDLKGTNEYIIPIIGDGALTGGMALEALNHIGHEQKDMIVILNDNEMSIAPNVGAIHSMLGRLRTAGKYQWVKDELEYLFKRIPAVGGKLAATAERIKDSLKYLLVSGMFFEELGFTYLGPVDGHSYDELFENLQYAKKTKGPVLLHVITKKGKGYKPAETDKTGTWHGTGPYKIDTGDFVKPKAAAPSWSSLVSETVRKLAREDERIVAITPAMPVGSKLEGFASEFPERMFDVGIAEQHAATMAAGLATQNMKPFLAIYSTFLQRAYDQVVHDICRQNLNVFIGIDRAGLVGADGETHQGVFDIAFLRHIPNLVLMMPKDENEGQHMVNTAVKYDDGPIAMRFPRGNGLGVKMDKELKTIPIGTWEVLRPGTDAVILTFGTTIPMALAAAEELQKEGRSVRVVNARFIKPLDENMLKEILNEGLPILTIEEAVLQGGFGSSILEFAHEHQSYSPIIDRMGIPDQFIEHGSVAKLLEEIGMTKEDVIRRIRLLTPVKTHKGIGS</sequence>
<name>DXS_BACLD</name>
<keyword id="KW-0414">Isoprene biosynthesis</keyword>
<keyword id="KW-0460">Magnesium</keyword>
<keyword id="KW-0479">Metal-binding</keyword>
<keyword id="KW-1185">Reference proteome</keyword>
<keyword id="KW-0784">Thiamine biosynthesis</keyword>
<keyword id="KW-0786">Thiamine pyrophosphate</keyword>
<keyword id="KW-0808">Transferase</keyword>
<proteinExistence type="inferred from homology"/>
<accession>Q65HJ2</accession>
<accession>Q62SZ6</accession>
<feature type="chain" id="PRO_0000256378" description="1-deoxy-D-xylulose-5-phosphate synthase">
    <location>
        <begin position="1"/>
        <end position="633"/>
    </location>
</feature>
<feature type="binding site" evidence="1">
    <location>
        <position position="72"/>
    </location>
    <ligand>
        <name>thiamine diphosphate</name>
        <dbReference type="ChEBI" id="CHEBI:58937"/>
    </ligand>
</feature>
<feature type="binding site" evidence="1">
    <location>
        <begin position="113"/>
        <end position="115"/>
    </location>
    <ligand>
        <name>thiamine diphosphate</name>
        <dbReference type="ChEBI" id="CHEBI:58937"/>
    </ligand>
</feature>
<feature type="binding site" evidence="1">
    <location>
        <position position="144"/>
    </location>
    <ligand>
        <name>Mg(2+)</name>
        <dbReference type="ChEBI" id="CHEBI:18420"/>
    </ligand>
</feature>
<feature type="binding site" evidence="1">
    <location>
        <begin position="145"/>
        <end position="146"/>
    </location>
    <ligand>
        <name>thiamine diphosphate</name>
        <dbReference type="ChEBI" id="CHEBI:58937"/>
    </ligand>
</feature>
<feature type="binding site" evidence="1">
    <location>
        <position position="173"/>
    </location>
    <ligand>
        <name>Mg(2+)</name>
        <dbReference type="ChEBI" id="CHEBI:18420"/>
    </ligand>
</feature>
<feature type="binding site" evidence="1">
    <location>
        <position position="173"/>
    </location>
    <ligand>
        <name>thiamine diphosphate</name>
        <dbReference type="ChEBI" id="CHEBI:58937"/>
    </ligand>
</feature>
<feature type="binding site" evidence="1">
    <location>
        <position position="284"/>
    </location>
    <ligand>
        <name>thiamine diphosphate</name>
        <dbReference type="ChEBI" id="CHEBI:58937"/>
    </ligand>
</feature>
<feature type="binding site" evidence="1">
    <location>
        <position position="367"/>
    </location>
    <ligand>
        <name>thiamine diphosphate</name>
        <dbReference type="ChEBI" id="CHEBI:58937"/>
    </ligand>
</feature>